<gene>
    <name type="primary">ATP7A</name>
</gene>
<accession>P49015</accession>
<evidence type="ECO:0000250" key="1">
    <source>
        <dbReference type="UniProtKB" id="P70705"/>
    </source>
</evidence>
<evidence type="ECO:0000250" key="2">
    <source>
        <dbReference type="UniProtKB" id="Q04656"/>
    </source>
</evidence>
<evidence type="ECO:0000250" key="3">
    <source>
        <dbReference type="UniProtKB" id="Q64430"/>
    </source>
</evidence>
<evidence type="ECO:0000255" key="4"/>
<evidence type="ECO:0000255" key="5">
    <source>
        <dbReference type="PROSITE-ProRule" id="PRU00280"/>
    </source>
</evidence>
<evidence type="ECO:0000305" key="6"/>
<dbReference type="EC" id="7.2.2.8"/>
<dbReference type="EMBL" id="U29946">
    <property type="protein sequence ID" value="AAB39918.1"/>
    <property type="molecule type" value="mRNA"/>
</dbReference>
<dbReference type="BMRB" id="P49015"/>
<dbReference type="SMR" id="P49015"/>
<dbReference type="GlyCosmos" id="P49015">
    <property type="glycosylation" value="7 sites, No reported glycans"/>
</dbReference>
<dbReference type="iPTMnet" id="P49015"/>
<dbReference type="PaxDb" id="10029-XP_007614755.1"/>
<dbReference type="eggNOG" id="KOG0207">
    <property type="taxonomic scope" value="Eukaryota"/>
</dbReference>
<dbReference type="Proteomes" id="UP000694386">
    <property type="component" value="Unplaced"/>
</dbReference>
<dbReference type="Proteomes" id="UP001108280">
    <property type="component" value="Unplaced"/>
</dbReference>
<dbReference type="GO" id="GO:0005886">
    <property type="term" value="C:plasma membrane"/>
    <property type="evidence" value="ECO:0007669"/>
    <property type="project" value="UniProtKB-SubCell"/>
</dbReference>
<dbReference type="GO" id="GO:0005802">
    <property type="term" value="C:trans-Golgi network"/>
    <property type="evidence" value="ECO:0007669"/>
    <property type="project" value="UniProtKB-ARBA"/>
</dbReference>
<dbReference type="GO" id="GO:0005524">
    <property type="term" value="F:ATP binding"/>
    <property type="evidence" value="ECO:0007669"/>
    <property type="project" value="UniProtKB-KW"/>
</dbReference>
<dbReference type="GO" id="GO:0016887">
    <property type="term" value="F:ATP hydrolysis activity"/>
    <property type="evidence" value="ECO:0007669"/>
    <property type="project" value="InterPro"/>
</dbReference>
<dbReference type="GO" id="GO:0005507">
    <property type="term" value="F:copper ion binding"/>
    <property type="evidence" value="ECO:0007669"/>
    <property type="project" value="InterPro"/>
</dbReference>
<dbReference type="GO" id="GO:0140581">
    <property type="term" value="F:P-type monovalent copper transporter activity"/>
    <property type="evidence" value="ECO:0007669"/>
    <property type="project" value="UniProtKB-EC"/>
</dbReference>
<dbReference type="CDD" id="cd00371">
    <property type="entry name" value="HMA"/>
    <property type="match status" value="6"/>
</dbReference>
<dbReference type="CDD" id="cd02094">
    <property type="entry name" value="P-type_ATPase_Cu-like"/>
    <property type="match status" value="1"/>
</dbReference>
<dbReference type="FunFam" id="3.30.70.100:FF:000026">
    <property type="entry name" value="ATPase copper transporting alpha"/>
    <property type="match status" value="1"/>
</dbReference>
<dbReference type="FunFam" id="3.30.70.100:FF:000001">
    <property type="entry name" value="ATPase copper transporting beta"/>
    <property type="match status" value="3"/>
</dbReference>
<dbReference type="FunFam" id="3.30.70.100:FF:000009">
    <property type="entry name" value="ATPase copper transporting beta"/>
    <property type="match status" value="1"/>
</dbReference>
<dbReference type="FunFam" id="3.30.70.100:FF:000031">
    <property type="entry name" value="copper-transporting ATPase 1"/>
    <property type="match status" value="1"/>
</dbReference>
<dbReference type="FunFam" id="3.40.50.1000:FF:000092">
    <property type="entry name" value="copper-transporting ATPase 1 isoform X2"/>
    <property type="match status" value="1"/>
</dbReference>
<dbReference type="FunFam" id="3.40.50.1000:FF:000144">
    <property type="entry name" value="copper-transporting ATPase 1 isoform X2"/>
    <property type="match status" value="1"/>
</dbReference>
<dbReference type="FunFam" id="2.70.150.10:FF:000002">
    <property type="entry name" value="Copper-transporting ATPase 1, putative"/>
    <property type="match status" value="1"/>
</dbReference>
<dbReference type="FunFam" id="3.40.1110.10:FF:000023">
    <property type="entry name" value="Copper-transporting ATPase 1, putative"/>
    <property type="match status" value="1"/>
</dbReference>
<dbReference type="Gene3D" id="3.30.70.100">
    <property type="match status" value="6"/>
</dbReference>
<dbReference type="Gene3D" id="3.40.1110.10">
    <property type="entry name" value="Calcium-transporting ATPase, cytoplasmic domain N"/>
    <property type="match status" value="1"/>
</dbReference>
<dbReference type="Gene3D" id="2.70.150.10">
    <property type="entry name" value="Calcium-transporting ATPase, cytoplasmic transduction domain A"/>
    <property type="match status" value="1"/>
</dbReference>
<dbReference type="Gene3D" id="3.40.50.1000">
    <property type="entry name" value="HAD superfamily/HAD-like"/>
    <property type="match status" value="1"/>
</dbReference>
<dbReference type="InterPro" id="IPR023299">
    <property type="entry name" value="ATPase_P-typ_cyto_dom_N"/>
</dbReference>
<dbReference type="InterPro" id="IPR018303">
    <property type="entry name" value="ATPase_P-typ_P_site"/>
</dbReference>
<dbReference type="InterPro" id="IPR023298">
    <property type="entry name" value="ATPase_P-typ_TM_dom_sf"/>
</dbReference>
<dbReference type="InterPro" id="IPR008250">
    <property type="entry name" value="ATPase_P-typ_transduc_dom_A_sf"/>
</dbReference>
<dbReference type="InterPro" id="IPR036412">
    <property type="entry name" value="HAD-like_sf"/>
</dbReference>
<dbReference type="InterPro" id="IPR023214">
    <property type="entry name" value="HAD_sf"/>
</dbReference>
<dbReference type="InterPro" id="IPR017969">
    <property type="entry name" value="Heavy-metal-associated_CS"/>
</dbReference>
<dbReference type="InterPro" id="IPR006122">
    <property type="entry name" value="HMA_Cu_ion-bd"/>
</dbReference>
<dbReference type="InterPro" id="IPR006121">
    <property type="entry name" value="HMA_dom"/>
</dbReference>
<dbReference type="InterPro" id="IPR036163">
    <property type="entry name" value="HMA_dom_sf"/>
</dbReference>
<dbReference type="InterPro" id="IPR027256">
    <property type="entry name" value="P-typ_ATPase_IB"/>
</dbReference>
<dbReference type="InterPro" id="IPR001757">
    <property type="entry name" value="P_typ_ATPase"/>
</dbReference>
<dbReference type="InterPro" id="IPR044492">
    <property type="entry name" value="P_typ_ATPase_HD_dom"/>
</dbReference>
<dbReference type="NCBIfam" id="TIGR01525">
    <property type="entry name" value="ATPase-IB_hvy"/>
    <property type="match status" value="1"/>
</dbReference>
<dbReference type="NCBIfam" id="TIGR01494">
    <property type="entry name" value="ATPase_P-type"/>
    <property type="match status" value="2"/>
</dbReference>
<dbReference type="NCBIfam" id="TIGR00003">
    <property type="entry name" value="copper ion binding protein"/>
    <property type="match status" value="5"/>
</dbReference>
<dbReference type="PANTHER" id="PTHR46594">
    <property type="entry name" value="P-TYPE CATION-TRANSPORTING ATPASE"/>
    <property type="match status" value="1"/>
</dbReference>
<dbReference type="PANTHER" id="PTHR46594:SF4">
    <property type="entry name" value="P-TYPE CATION-TRANSPORTING ATPASE"/>
    <property type="match status" value="1"/>
</dbReference>
<dbReference type="Pfam" id="PF00122">
    <property type="entry name" value="E1-E2_ATPase"/>
    <property type="match status" value="1"/>
</dbReference>
<dbReference type="Pfam" id="PF00403">
    <property type="entry name" value="HMA"/>
    <property type="match status" value="6"/>
</dbReference>
<dbReference type="Pfam" id="PF00702">
    <property type="entry name" value="Hydrolase"/>
    <property type="match status" value="1"/>
</dbReference>
<dbReference type="PRINTS" id="PR00119">
    <property type="entry name" value="CATATPASE"/>
</dbReference>
<dbReference type="PRINTS" id="PR00942">
    <property type="entry name" value="CUATPASEI"/>
</dbReference>
<dbReference type="SFLD" id="SFLDS00003">
    <property type="entry name" value="Haloacid_Dehalogenase"/>
    <property type="match status" value="1"/>
</dbReference>
<dbReference type="SFLD" id="SFLDF00027">
    <property type="entry name" value="p-type_atpase"/>
    <property type="match status" value="1"/>
</dbReference>
<dbReference type="SUPFAM" id="SSF81653">
    <property type="entry name" value="Calcium ATPase, transduction domain A"/>
    <property type="match status" value="1"/>
</dbReference>
<dbReference type="SUPFAM" id="SSF81665">
    <property type="entry name" value="Calcium ATPase, transmembrane domain M"/>
    <property type="match status" value="1"/>
</dbReference>
<dbReference type="SUPFAM" id="SSF56784">
    <property type="entry name" value="HAD-like"/>
    <property type="match status" value="1"/>
</dbReference>
<dbReference type="SUPFAM" id="SSF55008">
    <property type="entry name" value="HMA, heavy metal-associated domain"/>
    <property type="match status" value="6"/>
</dbReference>
<dbReference type="SUPFAM" id="SSF81660">
    <property type="entry name" value="Metal cation-transporting ATPase, ATP-binding domain N"/>
    <property type="match status" value="1"/>
</dbReference>
<dbReference type="PROSITE" id="PS00154">
    <property type="entry name" value="ATPASE_E1_E2"/>
    <property type="match status" value="1"/>
</dbReference>
<dbReference type="PROSITE" id="PS01047">
    <property type="entry name" value="HMA_1"/>
    <property type="match status" value="5"/>
</dbReference>
<dbReference type="PROSITE" id="PS50846">
    <property type="entry name" value="HMA_2"/>
    <property type="match status" value="7"/>
</dbReference>
<name>ATP7A_CRIGR</name>
<keyword id="KW-0067">ATP-binding</keyword>
<keyword id="KW-1003">Cell membrane</keyword>
<keyword id="KW-0186">Copper</keyword>
<keyword id="KW-0187">Copper transport</keyword>
<keyword id="KW-0325">Glycoprotein</keyword>
<keyword id="KW-0333">Golgi apparatus</keyword>
<keyword id="KW-0406">Ion transport</keyword>
<keyword id="KW-0472">Membrane</keyword>
<keyword id="KW-0479">Metal-binding</keyword>
<keyword id="KW-0547">Nucleotide-binding</keyword>
<keyword id="KW-0597">Phosphoprotein</keyword>
<keyword id="KW-0677">Repeat</keyword>
<keyword id="KW-1278">Translocase</keyword>
<keyword id="KW-0812">Transmembrane</keyword>
<keyword id="KW-1133">Transmembrane helix</keyword>
<keyword id="KW-0813">Transport</keyword>
<comment type="function">
    <text>May function in the export of copper from the cytoplasm to an intracellular organelle. It may serve as well for the export of other metals.</text>
</comment>
<comment type="catalytic activity">
    <reaction>
        <text>Cu(+)(in) + ATP + H2O = Cu(+)(out) + ADP + phosphate + H(+)</text>
        <dbReference type="Rhea" id="RHEA:25792"/>
        <dbReference type="ChEBI" id="CHEBI:15377"/>
        <dbReference type="ChEBI" id="CHEBI:15378"/>
        <dbReference type="ChEBI" id="CHEBI:30616"/>
        <dbReference type="ChEBI" id="CHEBI:43474"/>
        <dbReference type="ChEBI" id="CHEBI:49552"/>
        <dbReference type="ChEBI" id="CHEBI:456216"/>
        <dbReference type="EC" id="7.2.2.8"/>
    </reaction>
</comment>
<comment type="subunit">
    <text evidence="2 3">Monomer. Interacts with PDZD11 (By similarity). Interacts with ATOX1 and COMMD1 (By similarity). Interacts with TYRP1 (By similarity). Directly interacts with SOD3; this interaction is copper-dependent and is required for SOD3 activity (By similarity).</text>
</comment>
<comment type="subcellular location">
    <subcellularLocation>
        <location evidence="2">Golgi apparatus</location>
        <location evidence="2">trans-Golgi network membrane</location>
        <topology evidence="4">Multi-pass membrane protein</topology>
    </subcellularLocation>
    <subcellularLocation>
        <location evidence="2">Cell membrane</location>
        <topology evidence="4">Multi-pass membrane protein</topology>
    </subcellularLocation>
    <text evidence="2">Cycles constitutively between the trans-Golgi network (TGN) and the plasma membrane. Predominantly found in the TGN and relocalized to the plasma membrane in response to elevated copper levels.</text>
</comment>
<comment type="tissue specificity">
    <text>Expressed in most tissues except liver.</text>
</comment>
<comment type="similarity">
    <text evidence="6">Belongs to the cation transport ATPase (P-type) (TC 3.A.3) family.</text>
</comment>
<comment type="online information" name="Protein Spotlight">
    <link uri="https://www.proteinspotlight.org/back_issues/079"/>
    <text>Heavy metal - Issue 79 of February 2007</text>
</comment>
<sequence>MEPSMDVNSVTISVEGMTCISCVRTIEQKIGKENGIHHIKVSLEEKSATIIYDPKLQTPKTLQEAIDDMGFDALLHNANPLPVLTDTLFLTVTASLTLPWDHIQSTLLKTKGVTDIKIFPQKRTLAVTIIPSIVNANQIKELVPELSLETGTLEKRSGACEDHSMAQAGEVVLKIKVEGMTCHSCTSTTEGKIGKLQGVQRIKVSLDNQEATIVYQPHLISVEEIKKQIEAMGFPAFVKKQPKYLKLGAIDVERLKNTPVKSLEGSQQRPSYPSDSTATFIIEGMHCKSCVSNIESALPTLQYVSSIAVSLENRSAIVKYNASSVTPEMLIKAIEAVSPGQYRVSIANEVESTSSSPSSSSLQKMPLNVVSQPLTQETVINISGMTCNSCVQSIEGVVSKKPGVKSIHVSLANSFGTVEYDPLLTAPETLREVIVDMGFDAVLPDMSEPLVVIAQPSLETPLLPSTNDQDNMMTAVHSKCYIQVSGMTCASCVANIERNLRREEGIYSVLVALMAGKAEVRYNPAVIQPPVIAEFIRELGFGATVMENADEGDGILKLVVRGMTCASCVHKIESTLTKHKGIFYCSVALATNKAHIKYDPEIIGPRDIIHTIGSLGFEASLVKKDRSASHLDHKREIKQWRSSFLVSLFFCTPVMGLMMYMMAMEHHFATIHHNQSMSNEEMIKNHSSMFLERQILPGLSIMNLLSLLLCLPVQFFGGWYFYIQAYKALKHKTANMDVLIVLATTIAFAYSLIILLVAMYERAKVNPITSFDTPPMLFVFIALGRWLEHIAKGKTSEALAKLISLQATEATIVTLDSDNILLSEEQVDVELVQRGDIIKVVPGGKFPVDGRVIEGHSMVDESLITGEAMPVAKKPGSTVIAGSINQNGSLLICATHVGADTTLSQIVKLVEEAQTSKAPIQQFADKLGGYFVPFIVLVSIATLLVWIIIGFQNFTIVETYFPGYSRSISRTETIIRFAFQASITVLCIACPCSLGLATPTAVMVGTGVGAQNGILIKGGEPLEMAHKVKVVVFDKTGTITHGTPVVNQVKVLVESNKIPRSKILAIVGTAESNSEHPLGAAVTKYCKQELDTETLGTCTDFQVVPGCGISCKVTNIEGLLHKSNLKIEENNTKNASLVQIDAINEQSSTSSSMIIDAPLSNAVDTQQYKVLIGNREWMIRNGLVISNDVDDSMIDHGRKGRPAVLVTIDDELCGLIAIADTVKPEAELAVHILKSMGLEVVLMTGDNSKTARSIASQVGITKVFAEVLPSHKVAKVKQLQEEGKRVAMVGDGINDSPALAMANVGIAIGTGTDVTIEAADVVFIRNDLLDVVASIDLSRKTVKRIRINFLFPLIYNLVGIPIAAGVFLPIGLVFQPWMGSAAMAASSVSVVLSSLFLKLYRKPTYDNYELRTRSHTGQRSPSEISVHVGIDDASRNSPRLGLLDRIVNYSRASINSLLSDKRSLNSVVNSEPDKHS</sequence>
<organism>
    <name type="scientific">Cricetulus griseus</name>
    <name type="common">Chinese hamster</name>
    <name type="synonym">Cricetulus barabensis griseus</name>
    <dbReference type="NCBI Taxonomy" id="10029"/>
    <lineage>
        <taxon>Eukaryota</taxon>
        <taxon>Metazoa</taxon>
        <taxon>Chordata</taxon>
        <taxon>Craniata</taxon>
        <taxon>Vertebrata</taxon>
        <taxon>Euteleostomi</taxon>
        <taxon>Mammalia</taxon>
        <taxon>Eutheria</taxon>
        <taxon>Euarchontoglires</taxon>
        <taxon>Glires</taxon>
        <taxon>Rodentia</taxon>
        <taxon>Myomorpha</taxon>
        <taxon>Muroidea</taxon>
        <taxon>Cricetidae</taxon>
        <taxon>Cricetinae</taxon>
        <taxon>Cricetulus</taxon>
    </lineage>
</organism>
<feature type="chain" id="PRO_0000046310" description="Copper-transporting ATPase 1">
    <location>
        <begin position="1"/>
        <end position="1476" status="greater than"/>
    </location>
</feature>
<feature type="topological domain" description="Cytoplasmic" evidence="4">
    <location>
        <begin position="1"/>
        <end position="642"/>
    </location>
</feature>
<feature type="transmembrane region" description="Helical" evidence="4">
    <location>
        <begin position="643"/>
        <end position="665"/>
    </location>
</feature>
<feature type="transmembrane region" description="Helical" evidence="4">
    <location>
        <begin position="695"/>
        <end position="717"/>
    </location>
</feature>
<feature type="transmembrane region" description="Helical" evidence="4">
    <location>
        <begin position="736"/>
        <end position="760"/>
    </location>
</feature>
<feature type="transmembrane region" description="Helical" evidence="4">
    <location>
        <begin position="770"/>
        <end position="788"/>
    </location>
</feature>
<feature type="transmembrane region" description="Helical" evidence="4">
    <location>
        <begin position="930"/>
        <end position="952"/>
    </location>
</feature>
<feature type="transmembrane region" description="Helical" evidence="4">
    <location>
        <begin position="978"/>
        <end position="998"/>
    </location>
</feature>
<feature type="transmembrane region" description="Helical" evidence="4">
    <location>
        <begin position="1347"/>
        <end position="1373"/>
    </location>
</feature>
<feature type="transmembrane region" description="Helical" evidence="4">
    <location>
        <begin position="1379"/>
        <end position="1397"/>
    </location>
</feature>
<feature type="domain" description="HMA 1" evidence="5">
    <location>
        <begin position="8"/>
        <end position="74"/>
    </location>
</feature>
<feature type="domain" description="HMA 2" evidence="5">
    <location>
        <begin position="85"/>
        <end position="151"/>
    </location>
</feature>
<feature type="domain" description="HMA 3" evidence="5">
    <location>
        <begin position="171"/>
        <end position="237"/>
    </location>
</feature>
<feature type="domain" description="HMA 4" evidence="5">
    <location>
        <begin position="276"/>
        <end position="342"/>
    </location>
</feature>
<feature type="domain" description="HMA 5" evidence="5">
    <location>
        <begin position="376"/>
        <end position="442"/>
    </location>
</feature>
<feature type="domain" description="HMA 6" evidence="5">
    <location>
        <begin position="478"/>
        <end position="544"/>
    </location>
</feature>
<feature type="domain" description="HMA 7" evidence="5">
    <location>
        <begin position="554"/>
        <end position="620"/>
    </location>
</feature>
<feature type="active site" description="4-aspartylphosphate intermediate" evidence="6">
    <location>
        <position position="1034"/>
    </location>
</feature>
<feature type="binding site" evidence="2">
    <location>
        <position position="18"/>
    </location>
    <ligand>
        <name>Cu(+)</name>
        <dbReference type="ChEBI" id="CHEBI:49552"/>
        <label>1</label>
    </ligand>
</feature>
<feature type="binding site" evidence="5">
    <location>
        <position position="19"/>
    </location>
    <ligand>
        <name>Cu(+)</name>
        <dbReference type="ChEBI" id="CHEBI:49552"/>
        <label>1</label>
    </ligand>
</feature>
<feature type="binding site" evidence="5">
    <location>
        <position position="22"/>
    </location>
    <ligand>
        <name>Cu(+)</name>
        <dbReference type="ChEBI" id="CHEBI:49552"/>
        <label>1</label>
    </ligand>
</feature>
<feature type="binding site" evidence="5">
    <location>
        <position position="182"/>
    </location>
    <ligand>
        <name>Cu(+)</name>
        <dbReference type="ChEBI" id="CHEBI:49552"/>
        <label>2</label>
    </ligand>
</feature>
<feature type="binding site" evidence="5">
    <location>
        <position position="185"/>
    </location>
    <ligand>
        <name>Cu(+)</name>
        <dbReference type="ChEBI" id="CHEBI:49552"/>
        <label>2</label>
    </ligand>
</feature>
<feature type="binding site" evidence="5">
    <location>
        <position position="287"/>
    </location>
    <ligand>
        <name>Cu(+)</name>
        <dbReference type="ChEBI" id="CHEBI:49552"/>
        <label>3</label>
    </ligand>
</feature>
<feature type="binding site" evidence="5">
    <location>
        <position position="290"/>
    </location>
    <ligand>
        <name>Cu(+)</name>
        <dbReference type="ChEBI" id="CHEBI:49552"/>
        <label>3</label>
    </ligand>
</feature>
<feature type="binding site" evidence="5">
    <location>
        <position position="387"/>
    </location>
    <ligand>
        <name>Cu(+)</name>
        <dbReference type="ChEBI" id="CHEBI:49552"/>
        <label>4</label>
    </ligand>
</feature>
<feature type="binding site" evidence="5">
    <location>
        <position position="390"/>
    </location>
    <ligand>
        <name>Cu(+)</name>
        <dbReference type="ChEBI" id="CHEBI:49552"/>
        <label>4</label>
    </ligand>
</feature>
<feature type="binding site" evidence="5">
    <location>
        <position position="489"/>
    </location>
    <ligand>
        <name>Cu(+)</name>
        <dbReference type="ChEBI" id="CHEBI:49552"/>
        <label>5</label>
    </ligand>
</feature>
<feature type="binding site" evidence="5">
    <location>
        <position position="492"/>
    </location>
    <ligand>
        <name>Cu(+)</name>
        <dbReference type="ChEBI" id="CHEBI:49552"/>
        <label>5</label>
    </ligand>
</feature>
<feature type="binding site" evidence="5">
    <location>
        <position position="565"/>
    </location>
    <ligand>
        <name>Cu(+)</name>
        <dbReference type="ChEBI" id="CHEBI:49552"/>
        <label>6</label>
    </ligand>
</feature>
<feature type="binding site" evidence="5">
    <location>
        <position position="568"/>
    </location>
    <ligand>
        <name>Cu(+)</name>
        <dbReference type="ChEBI" id="CHEBI:49552"/>
        <label>6</label>
    </ligand>
</feature>
<feature type="modified residue" description="Phosphothreonine" evidence="2">
    <location>
        <position position="152"/>
    </location>
</feature>
<feature type="modified residue" description="Phosphothreonine" evidence="2">
    <location>
        <position position="326"/>
    </location>
</feature>
<feature type="modified residue" description="Phosphoserine" evidence="2">
    <location>
        <position position="338"/>
    </location>
</feature>
<feature type="modified residue" description="Phosphoserine" evidence="1">
    <location>
        <position position="352"/>
    </location>
</feature>
<feature type="modified residue" description="Phosphoserine" evidence="2">
    <location>
        <position position="356"/>
    </location>
</feature>
<feature type="modified residue" description="Phosphoserine" evidence="3">
    <location>
        <position position="361"/>
    </location>
</feature>
<feature type="modified residue" description="Phosphoserine" evidence="2">
    <location>
        <position position="1420"/>
    </location>
</feature>
<feature type="modified residue" description="Phosphoserine" evidence="2">
    <location>
        <position position="1422"/>
    </location>
</feature>
<feature type="modified residue" description="Phosphoserine" evidence="2">
    <location>
        <position position="1450"/>
    </location>
</feature>
<feature type="modified residue" description="Phosphoserine" evidence="2">
    <location>
        <position position="1453"/>
    </location>
</feature>
<feature type="modified residue" description="Phosphoserine" evidence="2">
    <location>
        <position position="1456"/>
    </location>
</feature>
<feature type="modified residue" description="Phosphoserine" evidence="2">
    <location>
        <position position="1459"/>
    </location>
</feature>
<feature type="modified residue" description="Phosphoserine" evidence="2">
    <location>
        <position position="1463"/>
    </location>
</feature>
<feature type="modified residue" description="Phosphoserine" evidence="3">
    <location>
        <position position="1466"/>
    </location>
</feature>
<feature type="modified residue" description="Phosphoserine" evidence="3">
    <location>
        <position position="1476"/>
    </location>
</feature>
<feature type="glycosylation site" description="N-linked (GlcNAc...) asparagine" evidence="4">
    <location>
        <position position="674"/>
    </location>
</feature>
<feature type="glycosylation site" description="N-linked (GlcNAc...) asparagine" evidence="4">
    <location>
        <position position="685"/>
    </location>
</feature>
<feature type="glycosylation site" description="N-linked (GlcNAc...) asparagine" evidence="4">
    <location>
        <position position="887"/>
    </location>
</feature>
<feature type="glycosylation site" description="N-linked (GlcNAc...) asparagine" evidence="4">
    <location>
        <position position="953"/>
    </location>
</feature>
<feature type="glycosylation site" description="N-linked (GlcNAc...) asparagine" evidence="4">
    <location>
        <position position="1130"/>
    </location>
</feature>
<feature type="glycosylation site" description="N-linked (GlcNAc...) asparagine" evidence="4">
    <location>
        <position position="1134"/>
    </location>
</feature>
<feature type="glycosylation site" description="N-linked (GlcNAc...) asparagine" evidence="4">
    <location>
        <position position="1448"/>
    </location>
</feature>
<feature type="non-terminal residue">
    <location>
        <position position="1476"/>
    </location>
</feature>
<proteinExistence type="evidence at transcript level"/>
<protein>
    <recommendedName>
        <fullName>Copper-transporting ATPase 1</fullName>
        <ecNumber>7.2.2.8</ecNumber>
    </recommendedName>
    <alternativeName>
        <fullName>Copper pump 1</fullName>
    </alternativeName>
</protein>
<reference key="1">
    <citation type="journal article" date="1995" name="Hum. Mol. Genet.">
        <title>Gene amplification of the Menkes (MNK; ATP7A) P-type ATPase gene of CHO cells is associated with copper resistance and enhanced copper efflux.</title>
        <authorList>
            <person name="Camakaris J."/>
            <person name="Petris M.J."/>
            <person name="Bailey L."/>
            <person name="Shen P."/>
            <person name="Lockhart P."/>
            <person name="Glover T.W."/>
            <person name="Barcroft C."/>
            <person name="Patton J."/>
            <person name="Mercer J.F.B."/>
        </authorList>
    </citation>
    <scope>NUCLEOTIDE SEQUENCE [MRNA]</scope>
    <source>
        <strain>Ovary</strain>
    </source>
</reference>